<comment type="function">
    <text>Intracisternal injection paralyzes mice.</text>
</comment>
<comment type="subcellular location">
    <subcellularLocation>
        <location>Secreted</location>
    </subcellularLocation>
</comment>
<comment type="tissue specificity">
    <text>Expressed by the venom gland.</text>
</comment>
<comment type="domain">
    <text evidence="1">The presence of a 'disulfide through disulfide knot' structurally defines this protein as a knottin.</text>
</comment>
<comment type="similarity">
    <text>Belongs to the neurotoxin 14 (magi-1) family. 05 (ICK-7) subfamily.</text>
</comment>
<proteinExistence type="evidence at protein level"/>
<reference key="1">
    <citation type="journal article" date="2004" name="Toxicon">
        <title>An overview of peptide toxins from the venom of the Chinese bird spider Selenocosmia huwena Wang [=Ornithoctonus huwena (Wang)].</title>
        <authorList>
            <person name="Liang S.-P."/>
        </authorList>
    </citation>
    <scope>PROTEIN SEQUENCE</scope>
    <scope>REVIEW</scope>
</reference>
<sequence length="34" mass="3137">IICAPEGGPCVAGIGCCAGLRCSGAKLGLAGSCQ</sequence>
<accession>P68423</accession>
<organism>
    <name type="scientific">Cyriopagopus schmidti</name>
    <name type="common">Chinese bird spider</name>
    <name type="synonym">Haplopelma schmidti</name>
    <dbReference type="NCBI Taxonomy" id="29017"/>
    <lineage>
        <taxon>Eukaryota</taxon>
        <taxon>Metazoa</taxon>
        <taxon>Ecdysozoa</taxon>
        <taxon>Arthropoda</taxon>
        <taxon>Chelicerata</taxon>
        <taxon>Arachnida</taxon>
        <taxon>Araneae</taxon>
        <taxon>Mygalomorphae</taxon>
        <taxon>Theraphosidae</taxon>
        <taxon>Cyriopagopus</taxon>
    </lineage>
</organism>
<evidence type="ECO:0000250" key="1"/>
<dbReference type="SMR" id="P68423"/>
<dbReference type="ArachnoServer" id="AS000337">
    <property type="toxin name" value="U4-theraphotoxin-Hs1a"/>
</dbReference>
<dbReference type="GO" id="GO:0005576">
    <property type="term" value="C:extracellular region"/>
    <property type="evidence" value="ECO:0007669"/>
    <property type="project" value="UniProtKB-SubCell"/>
</dbReference>
<dbReference type="GO" id="GO:0090729">
    <property type="term" value="F:toxin activity"/>
    <property type="evidence" value="ECO:0007669"/>
    <property type="project" value="UniProtKB-KW"/>
</dbReference>
<keyword id="KW-0903">Direct protein sequencing</keyword>
<keyword id="KW-1015">Disulfide bond</keyword>
<keyword id="KW-0960">Knottin</keyword>
<keyword id="KW-0964">Secreted</keyword>
<keyword id="KW-0800">Toxin</keyword>
<protein>
    <recommendedName>
        <fullName>U4-theraphotoxin-Hs1a</fullName>
        <shortName>U4-TRTX-Hs1a</shortName>
    </recommendedName>
    <alternativeName>
        <fullName>Huwentoxin-9</fullName>
    </alternativeName>
    <alternativeName>
        <fullName>Huwentoxin-IX</fullName>
        <shortName>HwTx-IX</shortName>
    </alternativeName>
</protein>
<name>TXH9_CYRSC</name>
<feature type="peptide" id="PRO_0000045009" description="U4-theraphotoxin-Hs1a">
    <location>
        <begin position="1"/>
        <end position="34"/>
    </location>
</feature>
<feature type="disulfide bond" evidence="1">
    <location>
        <begin position="3"/>
        <end position="17"/>
    </location>
</feature>
<feature type="disulfide bond" evidence="1">
    <location>
        <begin position="10"/>
        <end position="22"/>
    </location>
</feature>
<feature type="disulfide bond" evidence="1">
    <location>
        <begin position="16"/>
        <end position="33"/>
    </location>
</feature>